<reference key="1">
    <citation type="journal article" date="2016" name="PLoS Pathog.">
        <title>Biosynthesis of antibiotic leucinostatins in bio-control fungus Purpureocillium lilacinum and their inhibition on phytophthora revealed by genome mining.</title>
        <authorList>
            <person name="Wang G."/>
            <person name="Liu Z."/>
            <person name="Lin R."/>
            <person name="Li E."/>
            <person name="Mao Z."/>
            <person name="Ling J."/>
            <person name="Yang Y."/>
            <person name="Yin W.B."/>
            <person name="Xie B."/>
        </authorList>
    </citation>
    <scope>NUCLEOTIDE SEQUENCE [LARGE SCALE GENOMIC DNA]</scope>
    <scope>IDENTIFICATION</scope>
    <scope>FUNCTION</scope>
    <scope>INDUCTION</scope>
    <source>
        <strain>PLBJ-1</strain>
    </source>
</reference>
<comment type="function">
    <text evidence="2">Transcription factor that may coregulate the expression of the gene cluster that mediates the biosynthesis of the lipopeptide antibiotics leucinostatins that show extensive biological activities, including antimalarial, antiviral, antibacterial, antifungal, and antitumor activities, as well as phytotoxic.</text>
</comment>
<comment type="subcellular location">
    <subcellularLocation>
        <location evidence="1">Nucleus</location>
    </subcellularLocation>
</comment>
<comment type="induction">
    <text evidence="2">Expression is negatively regulated by the leucinostatins biosynthesis cluster-specific transcription regulator lcsF.</text>
</comment>
<sequence>MHLDWTLVLASRIRKVKCDEKKPCCQKCIDTGRTCDGYESPFRVVTSRSIINGARASGIPGAASRPVRPALTEISPADIDLLNRYFSTKTMFDVKLGCDEEAREVLEASLTDPTVRHAVSSLRSLREHLETSGDVSASAAQQSPSYGYDYGVQQYCMALGGLASNLSSPGSNALKSALLCCQIFISIEQVRGNYGTMAQHIIQGLGIMHEYRARPTLDDANNLVPAHHAQLPLLDAFVIKLFAAPCKFAEPSATADKEGGKAVSMCAISRHEQTVGSRNLRTIVPDMRTELTRISTSTLDFLVKVSSVDSAGNALRLLPEKTALLESLKSWLMDLELVHADIKSPGTEPLAVSFLRLFHQILKIILVEALNSSSNLQAELRTENDRLQGIGSIIDERVQSQRKNSSALDLIDNRLKCPA</sequence>
<accession>A0A179G9G5</accession>
<proteinExistence type="evidence at transcript level"/>
<organism>
    <name type="scientific">Purpureocillium lilacinum</name>
    <name type="common">Paecilomyces lilacinus</name>
    <dbReference type="NCBI Taxonomy" id="33203"/>
    <lineage>
        <taxon>Eukaryota</taxon>
        <taxon>Fungi</taxon>
        <taxon>Dikarya</taxon>
        <taxon>Ascomycota</taxon>
        <taxon>Pezizomycotina</taxon>
        <taxon>Sordariomycetes</taxon>
        <taxon>Hypocreomycetidae</taxon>
        <taxon>Hypocreales</taxon>
        <taxon>Ophiocordycipitaceae</taxon>
        <taxon>Purpureocillium</taxon>
    </lineage>
</organism>
<evidence type="ECO:0000255" key="1">
    <source>
        <dbReference type="PROSITE-ProRule" id="PRU00227"/>
    </source>
</evidence>
<evidence type="ECO:0000269" key="2">
    <source>
    </source>
</evidence>
<evidence type="ECO:0000303" key="3">
    <source>
    </source>
</evidence>
<name>LCSL_PURLI</name>
<feature type="chain" id="PRO_0000446609" description="Transcription regulator lscL">
    <location>
        <begin position="1"/>
        <end position="419"/>
    </location>
</feature>
<feature type="DNA-binding region" description="Zn(2)-C6 fungal-type" evidence="1">
    <location>
        <begin position="12"/>
        <end position="35"/>
    </location>
</feature>
<gene>
    <name evidence="3" type="primary">lcsL</name>
    <name type="ORF">VFPBJ_11786</name>
</gene>
<protein>
    <recommendedName>
        <fullName evidence="3">Transcription regulator lscL</fullName>
    </recommendedName>
    <alternativeName>
        <fullName evidence="3">Leucinostatins biosynthesis cluster protein L</fullName>
    </alternativeName>
</protein>
<dbReference type="EMBL" id="LSBH01000009">
    <property type="protein sequence ID" value="OAQ74455.1"/>
    <property type="molecule type" value="Genomic_DNA"/>
</dbReference>
<dbReference type="SMR" id="A0A179G9G5"/>
<dbReference type="Proteomes" id="UP000078240">
    <property type="component" value="Unassembled WGS sequence"/>
</dbReference>
<dbReference type="GO" id="GO:0005634">
    <property type="term" value="C:nucleus"/>
    <property type="evidence" value="ECO:0007669"/>
    <property type="project" value="UniProtKB-SubCell"/>
</dbReference>
<dbReference type="GO" id="GO:0003677">
    <property type="term" value="F:DNA binding"/>
    <property type="evidence" value="ECO:0007669"/>
    <property type="project" value="UniProtKB-KW"/>
</dbReference>
<dbReference type="GO" id="GO:0000981">
    <property type="term" value="F:DNA-binding transcription factor activity, RNA polymerase II-specific"/>
    <property type="evidence" value="ECO:0007669"/>
    <property type="project" value="InterPro"/>
</dbReference>
<dbReference type="GO" id="GO:0008270">
    <property type="term" value="F:zinc ion binding"/>
    <property type="evidence" value="ECO:0007669"/>
    <property type="project" value="InterPro"/>
</dbReference>
<dbReference type="CDD" id="cd00067">
    <property type="entry name" value="GAL4"/>
    <property type="match status" value="1"/>
</dbReference>
<dbReference type="Gene3D" id="4.10.240.10">
    <property type="entry name" value="Zn(2)-C6 fungal-type DNA-binding domain"/>
    <property type="match status" value="1"/>
</dbReference>
<dbReference type="InterPro" id="IPR052360">
    <property type="entry name" value="Transcr_Regulatory_Proteins"/>
</dbReference>
<dbReference type="InterPro" id="IPR036864">
    <property type="entry name" value="Zn2-C6_fun-type_DNA-bd_sf"/>
</dbReference>
<dbReference type="InterPro" id="IPR001138">
    <property type="entry name" value="Zn2Cys6_DnaBD"/>
</dbReference>
<dbReference type="PANTHER" id="PTHR36206">
    <property type="entry name" value="ASPERCRYPTIN BIOSYNTHESIS CLUSTER-SPECIFIC TRANSCRIPTION REGULATOR ATNN-RELATED"/>
    <property type="match status" value="1"/>
</dbReference>
<dbReference type="PANTHER" id="PTHR36206:SF12">
    <property type="entry name" value="ASPERCRYPTIN BIOSYNTHESIS CLUSTER-SPECIFIC TRANSCRIPTION REGULATOR ATNN-RELATED"/>
    <property type="match status" value="1"/>
</dbReference>
<dbReference type="Pfam" id="PF00172">
    <property type="entry name" value="Zn_clus"/>
    <property type="match status" value="1"/>
</dbReference>
<dbReference type="SUPFAM" id="SSF57701">
    <property type="entry name" value="Zn2/Cys6 DNA-binding domain"/>
    <property type="match status" value="1"/>
</dbReference>
<keyword id="KW-0238">DNA-binding</keyword>
<keyword id="KW-0479">Metal-binding</keyword>
<keyword id="KW-0539">Nucleus</keyword>
<keyword id="KW-0804">Transcription</keyword>
<keyword id="KW-0805">Transcription regulation</keyword>
<keyword id="KW-0862">Zinc</keyword>